<sequence>MKQFIDFIPLILFFIVYKIDPQNVEFAGFNLSGIYGATATLILASVIVYGALWLKHRHLEKSQWFTLGACLVLGGLTLAFHEDTFLKWKAPLVNWLFALAFAGSHFIGDKPMIQRIMGHAIQLPQGLWVRLNIAWVVFFLVCGFANLYVVFTYPNFWVDFKVFGSLGMTLLFLIGQGLFLARHLHDADTGEKPKD</sequence>
<proteinExistence type="inferred from homology"/>
<keyword id="KW-0997">Cell inner membrane</keyword>
<keyword id="KW-1003">Cell membrane</keyword>
<keyword id="KW-0472">Membrane</keyword>
<keyword id="KW-1185">Reference proteome</keyword>
<keyword id="KW-0812">Transmembrane</keyword>
<keyword id="KW-1133">Transmembrane helix</keyword>
<evidence type="ECO:0000255" key="1">
    <source>
        <dbReference type="HAMAP-Rule" id="MF_00189"/>
    </source>
</evidence>
<dbReference type="EMBL" id="AE004091">
    <property type="protein sequence ID" value="AAG06589.1"/>
    <property type="molecule type" value="Genomic_DNA"/>
</dbReference>
<dbReference type="PIR" id="D83244">
    <property type="entry name" value="D83244"/>
</dbReference>
<dbReference type="RefSeq" id="NP_251891.1">
    <property type="nucleotide sequence ID" value="NC_002516.2"/>
</dbReference>
<dbReference type="RefSeq" id="WP_003091488.1">
    <property type="nucleotide sequence ID" value="NZ_QZGE01000019.1"/>
</dbReference>
<dbReference type="FunCoup" id="Q9HZ39">
    <property type="interactions" value="126"/>
</dbReference>
<dbReference type="STRING" id="208964.PA3201"/>
<dbReference type="PaxDb" id="208964-PA3201"/>
<dbReference type="GeneID" id="882573"/>
<dbReference type="KEGG" id="pae:PA3201"/>
<dbReference type="PATRIC" id="fig|208964.12.peg.3348"/>
<dbReference type="PseudoCAP" id="PA3201"/>
<dbReference type="HOGENOM" id="CLU_089554_2_0_6"/>
<dbReference type="InParanoid" id="Q9HZ39"/>
<dbReference type="OrthoDB" id="9788219at2"/>
<dbReference type="PhylomeDB" id="Q9HZ39"/>
<dbReference type="BioCyc" id="PAER208964:G1FZ6-3261-MONOMER"/>
<dbReference type="Proteomes" id="UP000002438">
    <property type="component" value="Chromosome"/>
</dbReference>
<dbReference type="GO" id="GO:0005886">
    <property type="term" value="C:plasma membrane"/>
    <property type="evidence" value="ECO:0000318"/>
    <property type="project" value="GO_Central"/>
</dbReference>
<dbReference type="HAMAP" id="MF_00189">
    <property type="entry name" value="YciB"/>
    <property type="match status" value="1"/>
</dbReference>
<dbReference type="InterPro" id="IPR006008">
    <property type="entry name" value="YciB"/>
</dbReference>
<dbReference type="NCBIfam" id="TIGR00997">
    <property type="entry name" value="ispZ"/>
    <property type="match status" value="1"/>
</dbReference>
<dbReference type="NCBIfam" id="NF001325">
    <property type="entry name" value="PRK00259.1-3"/>
    <property type="match status" value="1"/>
</dbReference>
<dbReference type="NCBIfam" id="NF001327">
    <property type="entry name" value="PRK00259.1-5"/>
    <property type="match status" value="1"/>
</dbReference>
<dbReference type="PANTHER" id="PTHR36917:SF1">
    <property type="entry name" value="INNER MEMBRANE-SPANNING PROTEIN YCIB"/>
    <property type="match status" value="1"/>
</dbReference>
<dbReference type="PANTHER" id="PTHR36917">
    <property type="entry name" value="INTRACELLULAR SEPTATION PROTEIN A-RELATED"/>
    <property type="match status" value="1"/>
</dbReference>
<dbReference type="Pfam" id="PF04279">
    <property type="entry name" value="IspA"/>
    <property type="match status" value="1"/>
</dbReference>
<protein>
    <recommendedName>
        <fullName evidence="1">Inner membrane-spanning protein YciB</fullName>
    </recommendedName>
</protein>
<name>YCIB_PSEAE</name>
<comment type="function">
    <text evidence="1">Plays a role in cell envelope biogenesis, maintenance of cell envelope integrity and membrane homeostasis.</text>
</comment>
<comment type="subcellular location">
    <subcellularLocation>
        <location evidence="1">Cell inner membrane</location>
        <topology evidence="1">Multi-pass membrane protein</topology>
    </subcellularLocation>
</comment>
<comment type="similarity">
    <text evidence="1">Belongs to the YciB family.</text>
</comment>
<gene>
    <name evidence="1" type="primary">yciB</name>
    <name type="ordered locus">PA3201</name>
</gene>
<reference key="1">
    <citation type="journal article" date="2000" name="Nature">
        <title>Complete genome sequence of Pseudomonas aeruginosa PAO1, an opportunistic pathogen.</title>
        <authorList>
            <person name="Stover C.K."/>
            <person name="Pham X.-Q.T."/>
            <person name="Erwin A.L."/>
            <person name="Mizoguchi S.D."/>
            <person name="Warrener P."/>
            <person name="Hickey M.J."/>
            <person name="Brinkman F.S.L."/>
            <person name="Hufnagle W.O."/>
            <person name="Kowalik D.J."/>
            <person name="Lagrou M."/>
            <person name="Garber R.L."/>
            <person name="Goltry L."/>
            <person name="Tolentino E."/>
            <person name="Westbrock-Wadman S."/>
            <person name="Yuan Y."/>
            <person name="Brody L.L."/>
            <person name="Coulter S.N."/>
            <person name="Folger K.R."/>
            <person name="Kas A."/>
            <person name="Larbig K."/>
            <person name="Lim R.M."/>
            <person name="Smith K.A."/>
            <person name="Spencer D.H."/>
            <person name="Wong G.K.-S."/>
            <person name="Wu Z."/>
            <person name="Paulsen I.T."/>
            <person name="Reizer J."/>
            <person name="Saier M.H. Jr."/>
            <person name="Hancock R.E.W."/>
            <person name="Lory S."/>
            <person name="Olson M.V."/>
        </authorList>
    </citation>
    <scope>NUCLEOTIDE SEQUENCE [LARGE SCALE GENOMIC DNA]</scope>
    <source>
        <strain>ATCC 15692 / DSM 22644 / CIP 104116 / JCM 14847 / LMG 12228 / 1C / PRS 101 / PAO1</strain>
    </source>
</reference>
<organism>
    <name type="scientific">Pseudomonas aeruginosa (strain ATCC 15692 / DSM 22644 / CIP 104116 / JCM 14847 / LMG 12228 / 1C / PRS 101 / PAO1)</name>
    <dbReference type="NCBI Taxonomy" id="208964"/>
    <lineage>
        <taxon>Bacteria</taxon>
        <taxon>Pseudomonadati</taxon>
        <taxon>Pseudomonadota</taxon>
        <taxon>Gammaproteobacteria</taxon>
        <taxon>Pseudomonadales</taxon>
        <taxon>Pseudomonadaceae</taxon>
        <taxon>Pseudomonas</taxon>
    </lineage>
</organism>
<accession>Q9HZ39</accession>
<feature type="chain" id="PRO_0000206539" description="Inner membrane-spanning protein YciB">
    <location>
        <begin position="1"/>
        <end position="195"/>
    </location>
</feature>
<feature type="transmembrane region" description="Helical" evidence="1">
    <location>
        <begin position="34"/>
        <end position="54"/>
    </location>
</feature>
<feature type="transmembrane region" description="Helical" evidence="1">
    <location>
        <begin position="65"/>
        <end position="85"/>
    </location>
</feature>
<feature type="transmembrane region" description="Helical" evidence="1">
    <location>
        <begin position="88"/>
        <end position="108"/>
    </location>
</feature>
<feature type="transmembrane region" description="Helical" evidence="1">
    <location>
        <begin position="131"/>
        <end position="151"/>
    </location>
</feature>
<feature type="transmembrane region" description="Helical" evidence="1">
    <location>
        <begin position="160"/>
        <end position="180"/>
    </location>
</feature>